<keyword id="KW-0025">Alternative splicing</keyword>
<keyword id="KW-1015">Disulfide bond</keyword>
<keyword id="KW-0378">Hydrolase</keyword>
<keyword id="KW-0645">Protease</keyword>
<keyword id="KW-1185">Reference proteome</keyword>
<keyword id="KW-0964">Secreted</keyword>
<keyword id="KW-0720">Serine protease</keyword>
<keyword id="KW-0732">Signal</keyword>
<sequence length="459" mass="49149">MQARALLPATLAILATLAVLALAREPPAAPCPARCDVSRCPSPRCPGGYVPDLCNCCLVCAASEGEPCGRPLDSPCGDSLECVRGVCRCRWTHTVCGTDGHTYADVCALQAASRRALQVSGTPVRQLQKGACPSGLHQLTSPRYKFNFIADVVEKIAPAVVHIELFLRHPLFGRNVPLSSGSGFIMSEAGLIVTNAHVVSSSSTASGRQQLKVQLQNGDAYEATIQDIDKKSDIATIVIHPKKKLPVLLLGHSADLRPGEFVVAIGSPFALQNTVTTGIVSTAQRDGKELGLRDSDMDYIQTDAIINYGNSGGPLVNLDGEVIGINTLKVAAGISFAIPSDRITRFLSEFQNKHVKDWKKRFIGIRMRTITPSLVEELKAANPDFPAVSSGIYVQEVVPNSPSQRGGIQDGDIIVKVNGRPLADSSELQEAVLNESSLLLEVRRGNDDLLFSIIPEVVM</sequence>
<gene>
    <name type="primary">Htra3</name>
    <name type="synonym">Prsp</name>
    <name type="synonym">Tasp</name>
</gene>
<accession>Q9D236</accession>
<accession>B2RRV0</accession>
<accession>Q6WLC5</accession>
<accession>Q6YDR0</accession>
<feature type="signal peptide" evidence="2">
    <location>
        <begin position="1"/>
        <end position="23"/>
    </location>
</feature>
<feature type="chain" id="PRO_0000026950" description="Serine protease HTRA3">
    <location>
        <begin position="24"/>
        <end position="459"/>
    </location>
</feature>
<feature type="domain" description="IGFBP N-terminal" evidence="4">
    <location>
        <begin position="27"/>
        <end position="90"/>
    </location>
</feature>
<feature type="domain" description="Kazal-like" evidence="5">
    <location>
        <begin position="76"/>
        <end position="134"/>
    </location>
</feature>
<feature type="domain" description="PDZ" evidence="3">
    <location>
        <begin position="365"/>
        <end position="450"/>
    </location>
</feature>
<feature type="region of interest" description="Serine protease">
    <location>
        <begin position="181"/>
        <end position="347"/>
    </location>
</feature>
<feature type="active site" description="Charge relay system" evidence="1">
    <location>
        <position position="197"/>
    </location>
</feature>
<feature type="active site" description="Charge relay system" evidence="1">
    <location>
        <position position="233"/>
    </location>
</feature>
<feature type="active site" description="Charge relay system" evidence="1">
    <location>
        <position position="311"/>
    </location>
</feature>
<feature type="disulfide bond" evidence="4">
    <location>
        <begin position="31"/>
        <end position="54"/>
    </location>
</feature>
<feature type="disulfide bond" evidence="4">
    <location>
        <begin position="35"/>
        <end position="56"/>
    </location>
</feature>
<feature type="disulfide bond" evidence="4">
    <location>
        <begin position="40"/>
        <end position="57"/>
    </location>
</feature>
<feature type="disulfide bond" evidence="4">
    <location>
        <begin position="45"/>
        <end position="60"/>
    </location>
</feature>
<feature type="disulfide bond" evidence="4">
    <location>
        <begin position="68"/>
        <end position="82"/>
    </location>
</feature>
<feature type="disulfide bond" evidence="4">
    <location>
        <begin position="76"/>
        <end position="87"/>
    </location>
</feature>
<feature type="disulfide bond" evidence="12">
    <location>
        <begin position="89"/>
        <end position="107"/>
    </location>
</feature>
<feature type="disulfide bond" evidence="5">
    <location>
        <begin position="96"/>
        <end position="132"/>
    </location>
</feature>
<feature type="splice variant" id="VSP_018127" description="In isoform 3." evidence="11">
    <original>GSPFALQNTVTTG</original>
    <variation>ESPLCPAEHRDKC</variation>
    <location>
        <begin position="266"/>
        <end position="278"/>
    </location>
</feature>
<feature type="splice variant" id="VSP_018128" description="In isoform 2." evidence="10">
    <original>DWKKRFI</original>
    <variation>ALSPALH</variation>
    <location>
        <begin position="357"/>
        <end position="363"/>
    </location>
</feature>
<feature type="splice variant" id="VSP_018129" description="In isoform 2." evidence="10">
    <location>
        <begin position="364"/>
        <end position="459"/>
    </location>
</feature>
<feature type="mutagenesis site" description="Abolishes protease activity. No inhibition of BMP4-mediated signaling." evidence="7">
    <original>S</original>
    <variation>A</variation>
    <location>
        <position position="311"/>
    </location>
</feature>
<feature type="sequence conflict" description="In Ref. 2; AAK70226." evidence="12" ref="2">
    <original>D</original>
    <variation>T</variation>
    <location>
        <position position="286"/>
    </location>
</feature>
<feature type="sequence conflict" description="In Ref. 2; AAK70226." evidence="12" ref="2">
    <original>L</original>
    <variation>AA</variation>
    <location>
        <position position="440"/>
    </location>
</feature>
<evidence type="ECO:0000250" key="1">
    <source>
        <dbReference type="UniProtKB" id="P83110"/>
    </source>
</evidence>
<evidence type="ECO:0000255" key="2"/>
<evidence type="ECO:0000255" key="3">
    <source>
        <dbReference type="PROSITE-ProRule" id="PRU00143"/>
    </source>
</evidence>
<evidence type="ECO:0000255" key="4">
    <source>
        <dbReference type="PROSITE-ProRule" id="PRU00653"/>
    </source>
</evidence>
<evidence type="ECO:0000255" key="5">
    <source>
        <dbReference type="PROSITE-ProRule" id="PRU00798"/>
    </source>
</evidence>
<evidence type="ECO:0000269" key="6">
    <source>
    </source>
</evidence>
<evidence type="ECO:0000269" key="7">
    <source>
    </source>
</evidence>
<evidence type="ECO:0000269" key="8">
    <source>
    </source>
</evidence>
<evidence type="ECO:0000269" key="9">
    <source ref="2"/>
</evidence>
<evidence type="ECO:0000303" key="10">
    <source>
    </source>
</evidence>
<evidence type="ECO:0000303" key="11">
    <source ref="2"/>
</evidence>
<evidence type="ECO:0000305" key="12"/>
<dbReference type="EC" id="3.4.21.-"/>
<dbReference type="EMBL" id="AY156509">
    <property type="protein sequence ID" value="AAO17289.1"/>
    <property type="molecule type" value="mRNA"/>
</dbReference>
<dbReference type="EMBL" id="AY280664">
    <property type="protein sequence ID" value="AAQ16583.1"/>
    <property type="molecule type" value="mRNA"/>
</dbReference>
<dbReference type="EMBL" id="AY037300">
    <property type="protein sequence ID" value="AAK70226.1"/>
    <property type="molecule type" value="mRNA"/>
</dbReference>
<dbReference type="EMBL" id="BC138587">
    <property type="protein sequence ID" value="AAI38588.1"/>
    <property type="molecule type" value="mRNA"/>
</dbReference>
<dbReference type="EMBL" id="BC138588">
    <property type="protein sequence ID" value="AAI38589.1"/>
    <property type="molecule type" value="mRNA"/>
</dbReference>
<dbReference type="CCDS" id="CCDS19233.1">
    <molecule id="Q9D236-3"/>
</dbReference>
<dbReference type="CCDS" id="CCDS39071.1">
    <molecule id="Q9D236-4"/>
</dbReference>
<dbReference type="RefSeq" id="NP_001036080.1">
    <molecule id="Q9D236-4"/>
    <property type="nucleotide sequence ID" value="NM_001042615.2"/>
</dbReference>
<dbReference type="RefSeq" id="NP_084403.2">
    <molecule id="Q9D236-3"/>
    <property type="nucleotide sequence ID" value="NM_030127.3"/>
</dbReference>
<dbReference type="SMR" id="Q9D236"/>
<dbReference type="FunCoup" id="Q9D236">
    <property type="interactions" value="10"/>
</dbReference>
<dbReference type="IntAct" id="Q9D236">
    <property type="interactions" value="1"/>
</dbReference>
<dbReference type="MINT" id="Q9D236"/>
<dbReference type="STRING" id="10090.ENSMUSP00000084910"/>
<dbReference type="MEROPS" id="S01.284"/>
<dbReference type="iPTMnet" id="Q9D236"/>
<dbReference type="PhosphoSitePlus" id="Q9D236"/>
<dbReference type="jPOST" id="Q9D236"/>
<dbReference type="PaxDb" id="10090-ENSMUSP00000084910"/>
<dbReference type="PeptideAtlas" id="Q9D236"/>
<dbReference type="ProteomicsDB" id="273200">
    <molecule id="Q9D236-3"/>
</dbReference>
<dbReference type="ProteomicsDB" id="273201">
    <molecule id="Q9D236-4"/>
</dbReference>
<dbReference type="ProteomicsDB" id="273202">
    <molecule id="Q9D236-1"/>
</dbReference>
<dbReference type="Antibodypedia" id="9597">
    <property type="antibodies" value="109 antibodies from 26 providers"/>
</dbReference>
<dbReference type="DNASU" id="78558"/>
<dbReference type="Ensembl" id="ENSMUST00000087629.10">
    <molecule id="Q9D236-3"/>
    <property type="protein sequence ID" value="ENSMUSP00000084910.4"/>
    <property type="gene ID" value="ENSMUSG00000029096.16"/>
</dbReference>
<dbReference type="Ensembl" id="ENSMUST00000114233.3">
    <molecule id="Q9D236-4"/>
    <property type="protein sequence ID" value="ENSMUSP00000109871.3"/>
    <property type="gene ID" value="ENSMUSG00000029096.16"/>
</dbReference>
<dbReference type="GeneID" id="78558"/>
<dbReference type="KEGG" id="mmu:78558"/>
<dbReference type="UCSC" id="uc008xea.2">
    <molecule id="Q9D236-3"/>
    <property type="organism name" value="mouse"/>
</dbReference>
<dbReference type="UCSC" id="uc008xeb.2">
    <molecule id="Q9D236-4"/>
    <property type="organism name" value="mouse"/>
</dbReference>
<dbReference type="AGR" id="MGI:1925808"/>
<dbReference type="CTD" id="94031"/>
<dbReference type="MGI" id="MGI:1925808">
    <property type="gene designation" value="Htra3"/>
</dbReference>
<dbReference type="VEuPathDB" id="HostDB:ENSMUSG00000029096"/>
<dbReference type="eggNOG" id="ENOG502QT3F">
    <property type="taxonomic scope" value="Eukaryota"/>
</dbReference>
<dbReference type="GeneTree" id="ENSGT00940000159570"/>
<dbReference type="HOGENOM" id="CLU_020120_6_2_1"/>
<dbReference type="InParanoid" id="Q9D236"/>
<dbReference type="OMA" id="YDAKAYK"/>
<dbReference type="OrthoDB" id="4217619at2759"/>
<dbReference type="PhylomeDB" id="Q9D236"/>
<dbReference type="TreeFam" id="TF323480"/>
<dbReference type="BioGRID-ORCS" id="78558">
    <property type="hits" value="5 hits in 80 CRISPR screens"/>
</dbReference>
<dbReference type="ChiTaRS" id="Htra3">
    <property type="organism name" value="mouse"/>
</dbReference>
<dbReference type="PRO" id="PR:Q9D236"/>
<dbReference type="Proteomes" id="UP000000589">
    <property type="component" value="Chromosome 5"/>
</dbReference>
<dbReference type="RNAct" id="Q9D236">
    <property type="molecule type" value="protein"/>
</dbReference>
<dbReference type="Bgee" id="ENSMUSG00000029096">
    <property type="expression patterns" value="Expressed in decidua and 172 other cell types or tissues"/>
</dbReference>
<dbReference type="ExpressionAtlas" id="Q9D236">
    <property type="expression patterns" value="baseline and differential"/>
</dbReference>
<dbReference type="GO" id="GO:0005576">
    <property type="term" value="C:extracellular region"/>
    <property type="evidence" value="ECO:0007669"/>
    <property type="project" value="UniProtKB-SubCell"/>
</dbReference>
<dbReference type="GO" id="GO:0042802">
    <property type="term" value="F:identical protein binding"/>
    <property type="evidence" value="ECO:0007669"/>
    <property type="project" value="Ensembl"/>
</dbReference>
<dbReference type="GO" id="GO:0004252">
    <property type="term" value="F:serine-type endopeptidase activity"/>
    <property type="evidence" value="ECO:0007669"/>
    <property type="project" value="InterPro"/>
</dbReference>
<dbReference type="GO" id="GO:0008236">
    <property type="term" value="F:serine-type peptidase activity"/>
    <property type="evidence" value="ECO:0000314"/>
    <property type="project" value="UniProtKB"/>
</dbReference>
<dbReference type="GO" id="GO:0030514">
    <property type="term" value="P:negative regulation of BMP signaling pathway"/>
    <property type="evidence" value="ECO:0000314"/>
    <property type="project" value="UniProtKB"/>
</dbReference>
<dbReference type="GO" id="GO:0030512">
    <property type="term" value="P:negative regulation of transforming growth factor beta receptor signaling pathway"/>
    <property type="evidence" value="ECO:0000314"/>
    <property type="project" value="UniProtKB"/>
</dbReference>
<dbReference type="GO" id="GO:0006508">
    <property type="term" value="P:proteolysis"/>
    <property type="evidence" value="ECO:0000314"/>
    <property type="project" value="UniProtKB"/>
</dbReference>
<dbReference type="CDD" id="cd06785">
    <property type="entry name" value="cpPDZ_HtrA-like"/>
    <property type="match status" value="1"/>
</dbReference>
<dbReference type="CDD" id="cd00104">
    <property type="entry name" value="KAZAL_FS"/>
    <property type="match status" value="1"/>
</dbReference>
<dbReference type="FunFam" id="2.40.10.120:FF:000002">
    <property type="entry name" value="HtrA serine peptidase 3"/>
    <property type="match status" value="1"/>
</dbReference>
<dbReference type="FunFam" id="4.10.40.20:FF:000004">
    <property type="entry name" value="HtrA serine peptidase 3"/>
    <property type="match status" value="1"/>
</dbReference>
<dbReference type="FunFam" id="2.30.42.10:FF:000181">
    <property type="entry name" value="Putative serine protease HTRA3"/>
    <property type="match status" value="1"/>
</dbReference>
<dbReference type="Gene3D" id="2.30.42.10">
    <property type="match status" value="1"/>
</dbReference>
<dbReference type="Gene3D" id="2.40.10.120">
    <property type="match status" value="1"/>
</dbReference>
<dbReference type="Gene3D" id="3.30.60.30">
    <property type="match status" value="1"/>
</dbReference>
<dbReference type="Gene3D" id="4.10.40.20">
    <property type="match status" value="1"/>
</dbReference>
<dbReference type="InterPro" id="IPR009030">
    <property type="entry name" value="Growth_fac_rcpt_cys_sf"/>
</dbReference>
<dbReference type="InterPro" id="IPR000867">
    <property type="entry name" value="IGFBP-like"/>
</dbReference>
<dbReference type="InterPro" id="IPR002350">
    <property type="entry name" value="Kazal_dom"/>
</dbReference>
<dbReference type="InterPro" id="IPR036058">
    <property type="entry name" value="Kazal_dom_sf"/>
</dbReference>
<dbReference type="InterPro" id="IPR001478">
    <property type="entry name" value="PDZ"/>
</dbReference>
<dbReference type="InterPro" id="IPR036034">
    <property type="entry name" value="PDZ_sf"/>
</dbReference>
<dbReference type="InterPro" id="IPR009003">
    <property type="entry name" value="Peptidase_S1_PA"/>
</dbReference>
<dbReference type="InterPro" id="IPR001940">
    <property type="entry name" value="Peptidase_S1C"/>
</dbReference>
<dbReference type="PANTHER" id="PTHR22939">
    <property type="entry name" value="SERINE PROTEASE FAMILY S1C HTRA-RELATED"/>
    <property type="match status" value="1"/>
</dbReference>
<dbReference type="PANTHER" id="PTHR22939:SF14">
    <property type="entry name" value="SERINE PROTEASE HTRA3"/>
    <property type="match status" value="1"/>
</dbReference>
<dbReference type="Pfam" id="PF00219">
    <property type="entry name" value="IGFBP"/>
    <property type="match status" value="1"/>
</dbReference>
<dbReference type="Pfam" id="PF07648">
    <property type="entry name" value="Kazal_2"/>
    <property type="match status" value="1"/>
</dbReference>
<dbReference type="Pfam" id="PF13180">
    <property type="entry name" value="PDZ_2"/>
    <property type="match status" value="1"/>
</dbReference>
<dbReference type="Pfam" id="PF13365">
    <property type="entry name" value="Trypsin_2"/>
    <property type="match status" value="1"/>
</dbReference>
<dbReference type="PRINTS" id="PR00834">
    <property type="entry name" value="PROTEASES2C"/>
</dbReference>
<dbReference type="SMART" id="SM00121">
    <property type="entry name" value="IB"/>
    <property type="match status" value="1"/>
</dbReference>
<dbReference type="SMART" id="SM00280">
    <property type="entry name" value="KAZAL"/>
    <property type="match status" value="1"/>
</dbReference>
<dbReference type="SMART" id="SM00228">
    <property type="entry name" value="PDZ"/>
    <property type="match status" value="1"/>
</dbReference>
<dbReference type="SUPFAM" id="SSF57184">
    <property type="entry name" value="Growth factor receptor domain"/>
    <property type="match status" value="1"/>
</dbReference>
<dbReference type="SUPFAM" id="SSF100895">
    <property type="entry name" value="Kazal-type serine protease inhibitors"/>
    <property type="match status" value="1"/>
</dbReference>
<dbReference type="SUPFAM" id="SSF50156">
    <property type="entry name" value="PDZ domain-like"/>
    <property type="match status" value="1"/>
</dbReference>
<dbReference type="SUPFAM" id="SSF50494">
    <property type="entry name" value="Trypsin-like serine proteases"/>
    <property type="match status" value="1"/>
</dbReference>
<dbReference type="PROSITE" id="PS51323">
    <property type="entry name" value="IGFBP_N_2"/>
    <property type="match status" value="1"/>
</dbReference>
<dbReference type="PROSITE" id="PS51465">
    <property type="entry name" value="KAZAL_2"/>
    <property type="match status" value="1"/>
</dbReference>
<dbReference type="PROSITE" id="PS50106">
    <property type="entry name" value="PDZ"/>
    <property type="match status" value="1"/>
</dbReference>
<comment type="function">
    <text evidence="1 7">Serine protease that cleaves beta-casein/CSN2 as well as several extracellular matrix (ECM) proteoglycans such as decorin/DCN, biglycan/BGN and fibronectin/FN1. Inhibits signaling mediated by TGF-beta family proteins possibly indirectly by degradation of these ECM proteoglycans (PubMed:15206957). May act as a tumor suppressor. Negatively regulates, in vitro, trophoblast invasion during placental development and may be involved in the development of the placenta in vivo. May also have a role in ovarian development, granulosa cell differentiation and luteinization (By similarity).</text>
</comment>
<comment type="subunit">
    <text evidence="1 7">Homotrimer (By similarity). Interacts with MYH9 (By similarity). Interacts with TGFB1; the interaction inhibits TGFB-mediated signaling. Interacts with BMP4; the interaction inhibits BMP4-mediated signaling. Interacts with TGFB2 and GDF5.</text>
</comment>
<comment type="subcellular location">
    <subcellularLocation>
        <location evidence="1">Secreted</location>
    </subcellularLocation>
    <text evidence="1">Secretion increased during decidualization of endometrial stromal cells.</text>
</comment>
<comment type="alternative products">
    <event type="alternative splicing"/>
    <isoform>
        <id>Q9D236-3</id>
        <name>1</name>
        <name>A</name>
        <name>Long</name>
        <sequence type="displayed"/>
    </isoform>
    <isoform>
        <id>Q9D236-4</id>
        <name>2</name>
        <name>B</name>
        <name>Short</name>
        <sequence type="described" ref="VSP_018128 VSP_018129"/>
    </isoform>
    <isoform>
        <id>Q9D236-1</id>
        <name>3</name>
        <sequence type="described" ref="VSP_018127"/>
    </isoform>
</comment>
<comment type="tissue specificity">
    <text evidence="7 8 9">Highest level of isoform 1 in maternal part of the placenta, moderate level in heart, testis and ovary, low level in muscle and lung. High expression found in granulosa cells of the ovary. Expressed in bone matrix, particularly in articular chondrocytes. Very low level of isoform 2 expressed in placenta. Expressed in the bone matrix, particularly in articular chondrocytes.</text>
</comment>
<comment type="developmental stage">
    <text evidence="7 8">First expressed at 9.5 dpc. Levels then increase until 14.5 dpc after which they remain high until newborn. First detected in the eye at 10.5 dpc and then expressed in tissues associated with skeletal tissue. At 12.5 dpc expressed in the vertebral rudiments in the tail region and, in the developing eye, in lens epithelium. At adulthood, expression found in the ganglion cell layer and the inner nuclear layer of the retina. In the developing heart at 16.5 dpc, expressed in the endocardial cushion. In the trachea at this stage, in outer layers and in the aorta, in adventitia.</text>
</comment>
<comment type="induction">
    <text evidence="6 7">Up-regulated during early pregnancy coinciding with placentation. Also up-regulated in joint cartilage affected by arthritis.</text>
</comment>
<comment type="similarity">
    <text evidence="12">Belongs to the peptidase S1C family.</text>
</comment>
<proteinExistence type="evidence at protein level"/>
<reference key="1">
    <citation type="journal article" date="2003" name="Mol. Hum. Reprod.">
        <title>A novel serine protease of the mammalian HtrA family is up-regulated in mouse uterus coinciding with placentation.</title>
        <authorList>
            <person name="Nie G.Y."/>
            <person name="Li Y."/>
            <person name="Minoura H."/>
            <person name="Batten L."/>
            <person name="Ooi G.T."/>
            <person name="Findlay J.K."/>
            <person name="Salamonsen L.A."/>
        </authorList>
    </citation>
    <scope>NUCLEOTIDE SEQUENCE [MRNA] (ISOFORMS 1 AND 2)</scope>
    <scope>INDUCTION</scope>
    <source>
        <strain>SWR/J</strain>
        <tissue>Placenta</tissue>
    </source>
</reference>
<reference key="2">
    <citation type="submission" date="2001-05" db="EMBL/GenBank/DDBJ databases">
        <title>TASP, a novel mammalian serine protease.</title>
        <authorList>
            <person name="Matsuguchi T."/>
            <person name="Yoshikai Y."/>
        </authorList>
    </citation>
    <scope>NUCLEOTIDE SEQUENCE [MRNA] (ISOFORM 3)</scope>
    <scope>TISSUE SPECIFICITY</scope>
    <source>
        <strain>BALB/cJ</strain>
    </source>
</reference>
<reference key="3">
    <citation type="journal article" date="2004" name="Genome Res.">
        <title>The status, quality, and expansion of the NIH full-length cDNA project: the Mammalian Gene Collection (MGC).</title>
        <authorList>
            <consortium name="The MGC Project Team"/>
        </authorList>
    </citation>
    <scope>NUCLEOTIDE SEQUENCE [LARGE SCALE MRNA] (ISOFORM 1)</scope>
    <source>
        <tissue>Brain</tissue>
    </source>
</reference>
<reference key="4">
    <citation type="journal article" date="2004" name="Dev. Growth Differ.">
        <title>Developmentally regulated expression of mouse HtrA3 and its role as an inhibitor of TGF-beta signaling.</title>
        <authorList>
            <person name="Tocharus J."/>
            <person name="Tsuchiya A."/>
            <person name="Kajikawa M."/>
            <person name="Ueta Y."/>
            <person name="Oka C."/>
            <person name="Kawaichi M."/>
        </authorList>
    </citation>
    <scope>FUNCTION</scope>
    <scope>ENZYMATIC ACTIVITY</scope>
    <scope>DEVELOPMENTAL STAGE</scope>
    <scope>INDUCTION</scope>
    <scope>TISSUE SPECIFICITY</scope>
    <scope>INTERACTION WITH TGFB1</scope>
    <scope>TGFB2</scope>
    <scope>BMP4 AND GDF5</scope>
    <scope>MUTAGENESIS OF SER-311</scope>
</reference>
<reference key="5">
    <citation type="journal article" date="2006" name="Placenta">
        <title>HtrA3, a serine protease possessing an IGF-binding domain, is selectively expressed at the maternal-fetal interface during placentation in the mouse.</title>
        <authorList>
            <person name="Nie G."/>
            <person name="Li Y."/>
            <person name="He H."/>
            <person name="Findlay J.K."/>
            <person name="Salamonsen L.A."/>
        </authorList>
    </citation>
    <scope>TISSUE SPECIFICITY</scope>
    <scope>DEVELOPMENTAL STAGE</scope>
</reference>
<organism>
    <name type="scientific">Mus musculus</name>
    <name type="common">Mouse</name>
    <dbReference type="NCBI Taxonomy" id="10090"/>
    <lineage>
        <taxon>Eukaryota</taxon>
        <taxon>Metazoa</taxon>
        <taxon>Chordata</taxon>
        <taxon>Craniata</taxon>
        <taxon>Vertebrata</taxon>
        <taxon>Euteleostomi</taxon>
        <taxon>Mammalia</taxon>
        <taxon>Eutheria</taxon>
        <taxon>Euarchontoglires</taxon>
        <taxon>Glires</taxon>
        <taxon>Rodentia</taxon>
        <taxon>Myomorpha</taxon>
        <taxon>Muroidea</taxon>
        <taxon>Muridae</taxon>
        <taxon>Murinae</taxon>
        <taxon>Mus</taxon>
        <taxon>Mus</taxon>
    </lineage>
</organism>
<protein>
    <recommendedName>
        <fullName>Serine protease HTRA3</fullName>
        <ecNumber>3.4.21.-</ecNumber>
    </recommendedName>
    <alternativeName>
        <fullName>High-temperature requirement factor A3</fullName>
    </alternativeName>
    <alternativeName>
        <fullName>Pregnancy-related serine protease</fullName>
    </alternativeName>
    <alternativeName>
        <fullName>Toll-associated serine protease</fullName>
    </alternativeName>
</protein>
<name>HTRA3_MOUSE</name>